<proteinExistence type="inferred from homology"/>
<name>SECD_DESIS</name>
<keyword id="KW-0997">Cell inner membrane</keyword>
<keyword id="KW-1003">Cell membrane</keyword>
<keyword id="KW-0472">Membrane</keyword>
<keyword id="KW-0653">Protein transport</keyword>
<keyword id="KW-1185">Reference proteome</keyword>
<keyword id="KW-0811">Translocation</keyword>
<keyword id="KW-0812">Transmembrane</keyword>
<keyword id="KW-1133">Transmembrane helix</keyword>
<keyword id="KW-0813">Transport</keyword>
<sequence>MDGKLIAKLLLIAAVIGFCIHLATPLNEKIALGLDLQGGMHLALDVDTEQAVERKLDAMTNALRLEAQQQHLVIGTIQRRGMQILIPVPYAEEKAEFKRLMQRRYGQLELQDEQPELLVYGYTTYDIEEIKELAVGQALETIRNRIDQFGVSEPTVQKQGDRRIIIELPGVEDVDRAVELIGRTAMLEFRLVNENVSTRDALDGFLPENSEVLYQRHMDPQTNTEVDRTPFVLYRDVIFTGDRLLDARVRFDPQFNTPYVSITLDGEGARLFADVTGRNVGRRLAIVLDGHVHSAPVINERIPSGQASISGQFTMEQATDLSIVLRSGSLPAPVDIVENRTVGPTLGQDSIDKGILSVTIGMALVLLFMVAYYRLSGLLANMALLMNLIILMGLLAYFGATLTLPGIAGIILTIGIAVDANVLIFERIREELRRGASPRLAIEEGYAKAFSTILDANITTLIVAVILFQFGTGPIKGFAVTLSIGILASMFTAILCTRAIYELILVYKPIRKLSI</sequence>
<evidence type="ECO:0000255" key="1">
    <source>
        <dbReference type="HAMAP-Rule" id="MF_01463"/>
    </source>
</evidence>
<gene>
    <name evidence="1" type="primary">secD</name>
    <name type="ordered locus">Selin_2365</name>
</gene>
<protein>
    <recommendedName>
        <fullName evidence="1">Protein translocase subunit SecD</fullName>
    </recommendedName>
</protein>
<organism>
    <name type="scientific">Desulfurispirillum indicum (strain ATCC BAA-1389 / DSM 22839 / S5)</name>
    <dbReference type="NCBI Taxonomy" id="653733"/>
    <lineage>
        <taxon>Bacteria</taxon>
        <taxon>Pseudomonadati</taxon>
        <taxon>Chrysiogenota</taxon>
        <taxon>Chrysiogenia</taxon>
        <taxon>Chrysiogenales</taxon>
        <taxon>Chrysiogenaceae</taxon>
        <taxon>Desulfurispirillum</taxon>
    </lineage>
</organism>
<feature type="chain" id="PRO_0000412675" description="Protein translocase subunit SecD">
    <location>
        <begin position="1"/>
        <end position="515"/>
    </location>
</feature>
<feature type="transmembrane region" description="Helical" evidence="1">
    <location>
        <begin position="5"/>
        <end position="25"/>
    </location>
</feature>
<feature type="transmembrane region" description="Helical" evidence="1">
    <location>
        <begin position="353"/>
        <end position="373"/>
    </location>
</feature>
<feature type="transmembrane region" description="Helical" evidence="1">
    <location>
        <begin position="375"/>
        <end position="395"/>
    </location>
</feature>
<feature type="transmembrane region" description="Helical" evidence="1">
    <location>
        <begin position="398"/>
        <end position="418"/>
    </location>
</feature>
<feature type="transmembrane region" description="Helical" evidence="1">
    <location>
        <begin position="450"/>
        <end position="470"/>
    </location>
</feature>
<feature type="transmembrane region" description="Helical" evidence="1">
    <location>
        <begin position="477"/>
        <end position="497"/>
    </location>
</feature>
<comment type="function">
    <text evidence="1">Part of the Sec protein translocase complex. Interacts with the SecYEG preprotein conducting channel. SecDF uses the proton motive force (PMF) to complete protein translocation after the ATP-dependent function of SecA.</text>
</comment>
<comment type="subunit">
    <text evidence="1">Forms a complex with SecF. Part of the essential Sec protein translocation apparatus which comprises SecA, SecYEG and auxiliary proteins SecDF. Other proteins may also be involved.</text>
</comment>
<comment type="subcellular location">
    <subcellularLocation>
        <location evidence="1">Cell inner membrane</location>
        <topology evidence="1">Multi-pass membrane protein</topology>
    </subcellularLocation>
</comment>
<comment type="similarity">
    <text evidence="1">Belongs to the SecD/SecF family. SecD subfamily.</text>
</comment>
<dbReference type="EMBL" id="CP002432">
    <property type="protein sequence ID" value="ADU67081.1"/>
    <property type="molecule type" value="Genomic_DNA"/>
</dbReference>
<dbReference type="RefSeq" id="WP_013506954.1">
    <property type="nucleotide sequence ID" value="NC_014836.1"/>
</dbReference>
<dbReference type="SMR" id="E6W4K8"/>
<dbReference type="FunCoup" id="E6W4K8">
    <property type="interactions" value="306"/>
</dbReference>
<dbReference type="STRING" id="653733.Selin_2365"/>
<dbReference type="KEGG" id="din:Selin_2365"/>
<dbReference type="eggNOG" id="COG0342">
    <property type="taxonomic scope" value="Bacteria"/>
</dbReference>
<dbReference type="HOGENOM" id="CLU_007894_4_3_0"/>
<dbReference type="InParanoid" id="E6W4K8"/>
<dbReference type="OrthoDB" id="9805019at2"/>
<dbReference type="Proteomes" id="UP000002572">
    <property type="component" value="Chromosome"/>
</dbReference>
<dbReference type="GO" id="GO:0005886">
    <property type="term" value="C:plasma membrane"/>
    <property type="evidence" value="ECO:0007669"/>
    <property type="project" value="UniProtKB-SubCell"/>
</dbReference>
<dbReference type="GO" id="GO:0015450">
    <property type="term" value="F:protein-transporting ATPase activity"/>
    <property type="evidence" value="ECO:0007669"/>
    <property type="project" value="InterPro"/>
</dbReference>
<dbReference type="GO" id="GO:0065002">
    <property type="term" value="P:intracellular protein transmembrane transport"/>
    <property type="evidence" value="ECO:0007669"/>
    <property type="project" value="UniProtKB-UniRule"/>
</dbReference>
<dbReference type="GO" id="GO:0006605">
    <property type="term" value="P:protein targeting"/>
    <property type="evidence" value="ECO:0007669"/>
    <property type="project" value="UniProtKB-UniRule"/>
</dbReference>
<dbReference type="GO" id="GO:0043952">
    <property type="term" value="P:protein transport by the Sec complex"/>
    <property type="evidence" value="ECO:0007669"/>
    <property type="project" value="UniProtKB-UniRule"/>
</dbReference>
<dbReference type="FunFam" id="3.30.1360.200:FF:000002">
    <property type="entry name" value="Preprotein translocase subunit SecD"/>
    <property type="match status" value="1"/>
</dbReference>
<dbReference type="FunFam" id="1.20.1640.10:FF:000004">
    <property type="entry name" value="Protein translocase subunit SecD"/>
    <property type="match status" value="1"/>
</dbReference>
<dbReference type="Gene3D" id="3.30.1360.200">
    <property type="match status" value="1"/>
</dbReference>
<dbReference type="Gene3D" id="3.30.70.3400">
    <property type="match status" value="2"/>
</dbReference>
<dbReference type="Gene3D" id="1.20.1640.10">
    <property type="entry name" value="Multidrug efflux transporter AcrB transmembrane domain"/>
    <property type="match status" value="1"/>
</dbReference>
<dbReference type="HAMAP" id="MF_01463_B">
    <property type="entry name" value="SecD_B"/>
    <property type="match status" value="1"/>
</dbReference>
<dbReference type="InterPro" id="IPR005791">
    <property type="entry name" value="SecD"/>
</dbReference>
<dbReference type="InterPro" id="IPR022813">
    <property type="entry name" value="SecD/SecF_arch_bac"/>
</dbReference>
<dbReference type="InterPro" id="IPR048631">
    <property type="entry name" value="SecD_1st"/>
</dbReference>
<dbReference type="InterPro" id="IPR048634">
    <property type="entry name" value="SecD_SecF_C"/>
</dbReference>
<dbReference type="InterPro" id="IPR055344">
    <property type="entry name" value="SecD_SecF_C_bact"/>
</dbReference>
<dbReference type="InterPro" id="IPR054384">
    <property type="entry name" value="SecDF_P1_head"/>
</dbReference>
<dbReference type="NCBIfam" id="TIGR00916">
    <property type="entry name" value="2A0604s01"/>
    <property type="match status" value="1"/>
</dbReference>
<dbReference type="NCBIfam" id="TIGR01129">
    <property type="entry name" value="secD"/>
    <property type="match status" value="1"/>
</dbReference>
<dbReference type="PANTHER" id="PTHR30081:SF1">
    <property type="entry name" value="PROTEIN TRANSLOCASE SUBUNIT SECD"/>
    <property type="match status" value="1"/>
</dbReference>
<dbReference type="PANTHER" id="PTHR30081">
    <property type="entry name" value="PROTEIN-EXPORT MEMBRANE PROTEIN SEC"/>
    <property type="match status" value="1"/>
</dbReference>
<dbReference type="Pfam" id="PF21760">
    <property type="entry name" value="SecD_1st"/>
    <property type="match status" value="1"/>
</dbReference>
<dbReference type="Pfam" id="PF02355">
    <property type="entry name" value="SecD_SecF_C"/>
    <property type="match status" value="1"/>
</dbReference>
<dbReference type="Pfam" id="PF22599">
    <property type="entry name" value="SecDF_P1_head"/>
    <property type="match status" value="1"/>
</dbReference>
<dbReference type="SUPFAM" id="SSF82866">
    <property type="entry name" value="Multidrug efflux transporter AcrB transmembrane domain"/>
    <property type="match status" value="1"/>
</dbReference>
<reference key="1">
    <citation type="submission" date="2010-12" db="EMBL/GenBank/DDBJ databases">
        <title>Complete sequence of Desulfurispirillum indicum S5.</title>
        <authorList>
            <consortium name="US DOE Joint Genome Institute"/>
            <person name="Lucas S."/>
            <person name="Copeland A."/>
            <person name="Lapidus A."/>
            <person name="Cheng J.-F."/>
            <person name="Goodwin L."/>
            <person name="Pitluck S."/>
            <person name="Chertkov O."/>
            <person name="Held B."/>
            <person name="Detter J.C."/>
            <person name="Han C."/>
            <person name="Tapia R."/>
            <person name="Land M."/>
            <person name="Hauser L."/>
            <person name="Kyrpides N."/>
            <person name="Ivanova N."/>
            <person name="Mikhailova N."/>
            <person name="Haggblom M."/>
            <person name="Rauschenbach I."/>
            <person name="Bini E."/>
            <person name="Woyke T."/>
        </authorList>
    </citation>
    <scope>NUCLEOTIDE SEQUENCE [LARGE SCALE GENOMIC DNA]</scope>
    <source>
        <strain>ATCC BAA-1389 / DSM 22839 / S5</strain>
    </source>
</reference>
<accession>E6W4K8</accession>